<feature type="chain" id="PRO_0000361256" description="Putative S-adenosyl-L-methionine-dependent methyltransferase MUL_0818">
    <location>
        <begin position="1"/>
        <end position="324"/>
    </location>
</feature>
<feature type="binding site" evidence="1">
    <location>
        <position position="138"/>
    </location>
    <ligand>
        <name>S-adenosyl-L-methionine</name>
        <dbReference type="ChEBI" id="CHEBI:59789"/>
    </ligand>
</feature>
<feature type="binding site" evidence="1">
    <location>
        <begin position="167"/>
        <end position="168"/>
    </location>
    <ligand>
        <name>S-adenosyl-L-methionine</name>
        <dbReference type="ChEBI" id="CHEBI:59789"/>
    </ligand>
</feature>
<proteinExistence type="inferred from homology"/>
<organism>
    <name type="scientific">Mycobacterium ulcerans (strain Agy99)</name>
    <dbReference type="NCBI Taxonomy" id="362242"/>
    <lineage>
        <taxon>Bacteria</taxon>
        <taxon>Bacillati</taxon>
        <taxon>Actinomycetota</taxon>
        <taxon>Actinomycetes</taxon>
        <taxon>Mycobacteriales</taxon>
        <taxon>Mycobacteriaceae</taxon>
        <taxon>Mycobacterium</taxon>
        <taxon>Mycobacterium ulcerans group</taxon>
    </lineage>
</organism>
<name>Y818_MYCUA</name>
<accession>A0PM89</accession>
<sequence length="324" mass="35016">MTSTGSTRYDGDSWDLASSVGVTATMVAAARAMATRAENPLINDPYAEPLVRAVGVDLLTRLATGEFNVADLDDDPQRPLGPIGDVADNMAVRTRFFDDFFLAATRAGLEQVVILASGRDARAYRLPWPPQTVVYEIDLPQVIDFKSRTLADLGAAPTADRRVVAVDLREDWPAALRAAGFDPNQPTAWSAEGLLGYLPPEAQDRLLDTVTELSAPGSRLAAECLSGVDPAEEEQIKERMQEVSARWRAHGFDVDMVGLVYFGDRNEAVPYLSDRGWLLTSTPLPELRAANGLAPAAVDDDGPSVDMLYVSGTLYTTPRPDPAP</sequence>
<protein>
    <recommendedName>
        <fullName>Putative S-adenosyl-L-methionine-dependent methyltransferase MUL_0818</fullName>
        <ecNumber>2.1.1.-</ecNumber>
    </recommendedName>
</protein>
<comment type="function">
    <text evidence="1">Exhibits S-adenosyl-L-methionine-dependent methyltransferase activity.</text>
</comment>
<comment type="similarity">
    <text evidence="2">Belongs to the UPF0677 family.</text>
</comment>
<dbReference type="EC" id="2.1.1.-"/>
<dbReference type="EMBL" id="CP000325">
    <property type="protein sequence ID" value="ABL03458.1"/>
    <property type="molecule type" value="Genomic_DNA"/>
</dbReference>
<dbReference type="RefSeq" id="WP_011739083.1">
    <property type="nucleotide sequence ID" value="NC_008611.1"/>
</dbReference>
<dbReference type="SMR" id="A0PM89"/>
<dbReference type="KEGG" id="mul:MUL_0818"/>
<dbReference type="eggNOG" id="COG3315">
    <property type="taxonomic scope" value="Bacteria"/>
</dbReference>
<dbReference type="HOGENOM" id="CLU_056160_2_1_11"/>
<dbReference type="Proteomes" id="UP000000765">
    <property type="component" value="Chromosome"/>
</dbReference>
<dbReference type="GO" id="GO:0008168">
    <property type="term" value="F:methyltransferase activity"/>
    <property type="evidence" value="ECO:0007669"/>
    <property type="project" value="UniProtKB-KW"/>
</dbReference>
<dbReference type="GO" id="GO:0032259">
    <property type="term" value="P:methylation"/>
    <property type="evidence" value="ECO:0007669"/>
    <property type="project" value="UniProtKB-KW"/>
</dbReference>
<dbReference type="Gene3D" id="3.40.50.150">
    <property type="entry name" value="Vaccinia Virus protein VP39"/>
    <property type="match status" value="1"/>
</dbReference>
<dbReference type="InterPro" id="IPR007213">
    <property type="entry name" value="Ppm1/Ppm2/Tcmp"/>
</dbReference>
<dbReference type="InterPro" id="IPR029063">
    <property type="entry name" value="SAM-dependent_MTases_sf"/>
</dbReference>
<dbReference type="InterPro" id="IPR011610">
    <property type="entry name" value="SAM_mthyl_Trfase_ML2640-like"/>
</dbReference>
<dbReference type="NCBIfam" id="TIGR00027">
    <property type="entry name" value="mthyl_TIGR00027"/>
    <property type="match status" value="1"/>
</dbReference>
<dbReference type="PANTHER" id="PTHR43619">
    <property type="entry name" value="S-ADENOSYL-L-METHIONINE-DEPENDENT METHYLTRANSFERASE YKTD-RELATED"/>
    <property type="match status" value="1"/>
</dbReference>
<dbReference type="PANTHER" id="PTHR43619:SF2">
    <property type="entry name" value="S-ADENOSYL-L-METHIONINE-DEPENDENT METHYLTRANSFERASES SUPERFAMILY PROTEIN"/>
    <property type="match status" value="1"/>
</dbReference>
<dbReference type="Pfam" id="PF04072">
    <property type="entry name" value="LCM"/>
    <property type="match status" value="1"/>
</dbReference>
<dbReference type="SUPFAM" id="SSF53335">
    <property type="entry name" value="S-adenosyl-L-methionine-dependent methyltransferases"/>
    <property type="match status" value="1"/>
</dbReference>
<keyword id="KW-0489">Methyltransferase</keyword>
<keyword id="KW-0949">S-adenosyl-L-methionine</keyword>
<keyword id="KW-0808">Transferase</keyword>
<reference key="1">
    <citation type="journal article" date="2007" name="Genome Res.">
        <title>Reductive evolution and niche adaptation inferred from the genome of Mycobacterium ulcerans, the causative agent of Buruli ulcer.</title>
        <authorList>
            <person name="Stinear T.P."/>
            <person name="Seemann T."/>
            <person name="Pidot S."/>
            <person name="Frigui W."/>
            <person name="Reysset G."/>
            <person name="Garnier T."/>
            <person name="Meurice G."/>
            <person name="Simon D."/>
            <person name="Bouchier C."/>
            <person name="Ma L."/>
            <person name="Tichit M."/>
            <person name="Porter J.L."/>
            <person name="Ryan J."/>
            <person name="Johnson P.D.R."/>
            <person name="Davies J.K."/>
            <person name="Jenkin G.A."/>
            <person name="Small P.L.C."/>
            <person name="Jones L.M."/>
            <person name="Tekaia F."/>
            <person name="Laval F."/>
            <person name="Daffe M."/>
            <person name="Parkhill J."/>
            <person name="Cole S.T."/>
        </authorList>
    </citation>
    <scope>NUCLEOTIDE SEQUENCE [LARGE SCALE GENOMIC DNA]</scope>
    <source>
        <strain>Agy99</strain>
    </source>
</reference>
<evidence type="ECO:0000250" key="1"/>
<evidence type="ECO:0000305" key="2"/>
<gene>
    <name type="ordered locus">MUL_0818</name>
</gene>